<protein>
    <recommendedName>
        <fullName evidence="1">Large ribosomal subunit protein uL22</fullName>
    </recommendedName>
    <alternativeName>
        <fullName evidence="2">50S ribosomal protein L22</fullName>
    </alternativeName>
</protein>
<comment type="function">
    <text evidence="1">This protein binds specifically to 23S rRNA; its binding is stimulated by other ribosomal proteins, e.g. L4, L17, and L20. It is important during the early stages of 50S assembly. It makes multiple contacts with different domains of the 23S rRNA in the assembled 50S subunit and ribosome (By similarity).</text>
</comment>
<comment type="function">
    <text evidence="1">The globular domain of the protein is located near the polypeptide exit tunnel on the outside of the subunit, while an extended beta-hairpin is found that lines the wall of the exit tunnel in the center of the 70S ribosome.</text>
</comment>
<comment type="subunit">
    <text evidence="1">Part of the 50S ribosomal subunit.</text>
</comment>
<comment type="similarity">
    <text evidence="1">Belongs to the universal ribosomal protein uL22 family.</text>
</comment>
<sequence>MISKAIIKKVSIAPRKARLVVDLIRGKEIKVAKAILMFTPKSASSIVLKLLNSAEANLAQNINLKSNDFYISEVYVNEGIRLKRLFPRAKGSGDMIKKRTSHIVLKLSMAKEIKEEIKAKKKEVNIHGTKI</sequence>
<reference key="1">
    <citation type="journal article" date="2008" name="BMC Genomics">
        <title>The linear chromosome of the plant-pathogenic mycoplasma 'Candidatus Phytoplasma mali'.</title>
        <authorList>
            <person name="Kube M."/>
            <person name="Schneider B."/>
            <person name="Kuhl H."/>
            <person name="Dandekar T."/>
            <person name="Heitmann K."/>
            <person name="Migdoll A.M."/>
            <person name="Reinhardt R."/>
            <person name="Seemueller E."/>
        </authorList>
    </citation>
    <scope>NUCLEOTIDE SEQUENCE [LARGE SCALE GENOMIC DNA]</scope>
    <source>
        <strain>AT</strain>
    </source>
</reference>
<organism>
    <name type="scientific">Phytoplasma mali (strain AT)</name>
    <dbReference type="NCBI Taxonomy" id="482235"/>
    <lineage>
        <taxon>Bacteria</taxon>
        <taxon>Bacillati</taxon>
        <taxon>Mycoplasmatota</taxon>
        <taxon>Mollicutes</taxon>
        <taxon>Acholeplasmatales</taxon>
        <taxon>Acholeplasmataceae</taxon>
        <taxon>Candidatus Phytoplasma</taxon>
        <taxon>16SrX (Apple proliferation group)</taxon>
    </lineage>
</organism>
<gene>
    <name evidence="1" type="primary">rplV</name>
    <name type="ordered locus">ATP_00346</name>
</gene>
<dbReference type="EMBL" id="CU469464">
    <property type="protein sequence ID" value="CAP18533.1"/>
    <property type="molecule type" value="Genomic_DNA"/>
</dbReference>
<dbReference type="SMR" id="B3QZZ6"/>
<dbReference type="STRING" id="37692.ATP_00346"/>
<dbReference type="KEGG" id="pml:ATP_00346"/>
<dbReference type="eggNOG" id="COG0091">
    <property type="taxonomic scope" value="Bacteria"/>
</dbReference>
<dbReference type="HOGENOM" id="CLU_083987_3_3_14"/>
<dbReference type="Proteomes" id="UP000002020">
    <property type="component" value="Chromosome"/>
</dbReference>
<dbReference type="GO" id="GO:0022625">
    <property type="term" value="C:cytosolic large ribosomal subunit"/>
    <property type="evidence" value="ECO:0007669"/>
    <property type="project" value="TreeGrafter"/>
</dbReference>
<dbReference type="GO" id="GO:0019843">
    <property type="term" value="F:rRNA binding"/>
    <property type="evidence" value="ECO:0007669"/>
    <property type="project" value="UniProtKB-UniRule"/>
</dbReference>
<dbReference type="GO" id="GO:0003735">
    <property type="term" value="F:structural constituent of ribosome"/>
    <property type="evidence" value="ECO:0007669"/>
    <property type="project" value="InterPro"/>
</dbReference>
<dbReference type="GO" id="GO:0006412">
    <property type="term" value="P:translation"/>
    <property type="evidence" value="ECO:0007669"/>
    <property type="project" value="UniProtKB-UniRule"/>
</dbReference>
<dbReference type="CDD" id="cd00336">
    <property type="entry name" value="Ribosomal_L22"/>
    <property type="match status" value="1"/>
</dbReference>
<dbReference type="Gene3D" id="3.90.470.10">
    <property type="entry name" value="Ribosomal protein L22/L17"/>
    <property type="match status" value="1"/>
</dbReference>
<dbReference type="HAMAP" id="MF_01331_B">
    <property type="entry name" value="Ribosomal_uL22_B"/>
    <property type="match status" value="1"/>
</dbReference>
<dbReference type="InterPro" id="IPR001063">
    <property type="entry name" value="Ribosomal_uL22"/>
</dbReference>
<dbReference type="InterPro" id="IPR005727">
    <property type="entry name" value="Ribosomal_uL22_bac/chlpt-type"/>
</dbReference>
<dbReference type="InterPro" id="IPR047867">
    <property type="entry name" value="Ribosomal_uL22_bac/org-type"/>
</dbReference>
<dbReference type="InterPro" id="IPR018260">
    <property type="entry name" value="Ribosomal_uL22_CS"/>
</dbReference>
<dbReference type="InterPro" id="IPR036394">
    <property type="entry name" value="Ribosomal_uL22_sf"/>
</dbReference>
<dbReference type="NCBIfam" id="TIGR01044">
    <property type="entry name" value="rplV_bact"/>
    <property type="match status" value="1"/>
</dbReference>
<dbReference type="PANTHER" id="PTHR13501">
    <property type="entry name" value="CHLOROPLAST 50S RIBOSOMAL PROTEIN L22-RELATED"/>
    <property type="match status" value="1"/>
</dbReference>
<dbReference type="PANTHER" id="PTHR13501:SF8">
    <property type="entry name" value="LARGE RIBOSOMAL SUBUNIT PROTEIN UL22M"/>
    <property type="match status" value="1"/>
</dbReference>
<dbReference type="Pfam" id="PF00237">
    <property type="entry name" value="Ribosomal_L22"/>
    <property type="match status" value="1"/>
</dbReference>
<dbReference type="SUPFAM" id="SSF54843">
    <property type="entry name" value="Ribosomal protein L22"/>
    <property type="match status" value="1"/>
</dbReference>
<dbReference type="PROSITE" id="PS00464">
    <property type="entry name" value="RIBOSOMAL_L22"/>
    <property type="match status" value="1"/>
</dbReference>
<accession>B3QZZ6</accession>
<name>RL22_PHYMT</name>
<feature type="chain" id="PRO_1000166078" description="Large ribosomal subunit protein uL22">
    <location>
        <begin position="1"/>
        <end position="131"/>
    </location>
</feature>
<keyword id="KW-1185">Reference proteome</keyword>
<keyword id="KW-0687">Ribonucleoprotein</keyword>
<keyword id="KW-0689">Ribosomal protein</keyword>
<keyword id="KW-0694">RNA-binding</keyword>
<keyword id="KW-0699">rRNA-binding</keyword>
<proteinExistence type="inferred from homology"/>
<evidence type="ECO:0000255" key="1">
    <source>
        <dbReference type="HAMAP-Rule" id="MF_01331"/>
    </source>
</evidence>
<evidence type="ECO:0000305" key="2"/>